<accession>Q86CZ2</accession>
<accession>Q54Y10</accession>
<accession>Q95PH2</accession>
<proteinExistence type="evidence at protein level"/>
<feature type="chain" id="PRO_0000328272" description="Hybrid signal transduction histidine kinase K">
    <location>
        <begin position="1"/>
        <end position="1213"/>
    </location>
</feature>
<feature type="transmembrane region" description="Helical" evidence="2">
    <location>
        <begin position="600"/>
        <end position="618"/>
    </location>
</feature>
<feature type="transmembrane region" description="Helical" evidence="2">
    <location>
        <begin position="628"/>
        <end position="648"/>
    </location>
</feature>
<feature type="transmembrane region" description="Helical" evidence="2">
    <location>
        <begin position="652"/>
        <end position="672"/>
    </location>
</feature>
<feature type="transmembrane region" description="Helical" evidence="2">
    <location>
        <begin position="676"/>
        <end position="696"/>
    </location>
</feature>
<feature type="transmembrane region" description="Helical" evidence="2">
    <location>
        <begin position="729"/>
        <end position="749"/>
    </location>
</feature>
<feature type="transmembrane region" description="Helical" evidence="2">
    <location>
        <begin position="768"/>
        <end position="788"/>
    </location>
</feature>
<feature type="domain" description="Histidine kinase" evidence="3">
    <location>
        <begin position="822"/>
        <end position="1052"/>
    </location>
</feature>
<feature type="domain" description="Response regulatory" evidence="4">
    <location>
        <begin position="1076"/>
        <end position="1199"/>
    </location>
</feature>
<feature type="region of interest" description="Disordered" evidence="5">
    <location>
        <begin position="1"/>
        <end position="37"/>
    </location>
</feature>
<feature type="region of interest" description="Disordered" evidence="5">
    <location>
        <begin position="98"/>
        <end position="189"/>
    </location>
</feature>
<feature type="region of interest" description="Disordered" evidence="5">
    <location>
        <begin position="279"/>
        <end position="392"/>
    </location>
</feature>
<feature type="region of interest" description="Disordered" evidence="5">
    <location>
        <begin position="495"/>
        <end position="565"/>
    </location>
</feature>
<feature type="compositionally biased region" description="Low complexity" evidence="5">
    <location>
        <begin position="98"/>
        <end position="162"/>
    </location>
</feature>
<feature type="compositionally biased region" description="Low complexity" evidence="5">
    <location>
        <begin position="171"/>
        <end position="189"/>
    </location>
</feature>
<feature type="compositionally biased region" description="Low complexity" evidence="5">
    <location>
        <begin position="279"/>
        <end position="331"/>
    </location>
</feature>
<feature type="compositionally biased region" description="Low complexity" evidence="5">
    <location>
        <begin position="339"/>
        <end position="371"/>
    </location>
</feature>
<feature type="compositionally biased region" description="Low complexity" evidence="5">
    <location>
        <begin position="498"/>
        <end position="511"/>
    </location>
</feature>
<feature type="compositionally biased region" description="Low complexity" evidence="5">
    <location>
        <begin position="522"/>
        <end position="565"/>
    </location>
</feature>
<feature type="modified residue" description="Phosphohistidine; by autocatalysis" evidence="3">
    <location>
        <position position="825"/>
    </location>
</feature>
<feature type="modified residue" description="4-aspartylphosphate" evidence="4">
    <location>
        <position position="1125"/>
    </location>
</feature>
<feature type="sequence conflict" description="In Ref. 1; AAK54095." evidence="8" ref="1">
    <original>N</original>
    <variation>T</variation>
    <location>
        <position position="253"/>
    </location>
</feature>
<feature type="sequence conflict" description="In Ref. 1; AAK54095." evidence="8" ref="1">
    <original>V</original>
    <variation>A</variation>
    <location>
        <position position="431"/>
    </location>
</feature>
<feature type="sequence conflict" description="In Ref. 1; AAK54095." evidence="8" ref="1">
    <original>S</original>
    <variation>F</variation>
    <location>
        <position position="443"/>
    </location>
</feature>
<feature type="sequence conflict" description="In Ref. 1; AAK54095." evidence="8" ref="1">
    <original>I</original>
    <variation>F</variation>
    <location>
        <position position="457"/>
    </location>
</feature>
<feature type="sequence conflict" description="In Ref. 1; AAK54095." evidence="8" ref="1">
    <original>QQ</original>
    <variation>HL</variation>
    <location>
        <begin position="509"/>
        <end position="510"/>
    </location>
</feature>
<feature type="sequence conflict" description="In Ref. 1; AAK54095." evidence="8" ref="1">
    <original>L</original>
    <variation>V</variation>
    <location>
        <position position="649"/>
    </location>
</feature>
<feature type="sequence conflict" description="In Ref. 1; AAK54095." evidence="8" ref="1">
    <original>T</original>
    <variation>P</variation>
    <location>
        <position position="714"/>
    </location>
</feature>
<feature type="sequence conflict" description="In Ref. 1; AAK54095." evidence="8" ref="1">
    <original>I</original>
    <variation>P</variation>
    <location>
        <position position="717"/>
    </location>
</feature>
<evidence type="ECO:0000250" key="1"/>
<evidence type="ECO:0000255" key="2"/>
<evidence type="ECO:0000255" key="3">
    <source>
        <dbReference type="PROSITE-ProRule" id="PRU00107"/>
    </source>
</evidence>
<evidence type="ECO:0000255" key="4">
    <source>
        <dbReference type="PROSITE-ProRule" id="PRU00169"/>
    </source>
</evidence>
<evidence type="ECO:0000256" key="5">
    <source>
        <dbReference type="SAM" id="MobiDB-lite"/>
    </source>
</evidence>
<evidence type="ECO:0000269" key="6">
    <source>
    </source>
</evidence>
<evidence type="ECO:0000269" key="7">
    <source>
    </source>
</evidence>
<evidence type="ECO:0000305" key="8"/>
<reference key="1">
    <citation type="book" date="2001" name="Histidine kinases in signal transduction">
        <title>The histidine kinases of Dictyostelium.</title>
        <editorList>
            <person name="Inouye M."/>
            <person name="Dutta R."/>
        </editorList>
        <authorList>
            <person name="Anjard C."/>
            <person name="Loomis W.F."/>
        </authorList>
    </citation>
    <scope>NUCLEOTIDE SEQUENCE [GENOMIC DNA]</scope>
</reference>
<reference key="2">
    <citation type="journal article" date="2006" name="Dev. Biol.">
        <title>The histidine kinase homologue DhkK/Sombrero controls morphogenesis in Dictyostelium.</title>
        <authorList>
            <person name="Thomason P.A."/>
            <person name="Sawai S."/>
            <person name="Stock J.B."/>
            <person name="Cox E.C."/>
        </authorList>
    </citation>
    <scope>NUCLEOTIDE SEQUENCE [MRNA]</scope>
    <scope>CHARACTERIZATION</scope>
    <scope>DEVELOPMENTAL STAGE</scope>
    <scope>SUBCELLULAR LOCATION</scope>
    <source>
        <strain>AX2</strain>
    </source>
</reference>
<reference key="3">
    <citation type="journal article" date="2005" name="Nature">
        <title>The genome of the social amoeba Dictyostelium discoideum.</title>
        <authorList>
            <person name="Eichinger L."/>
            <person name="Pachebat J.A."/>
            <person name="Gloeckner G."/>
            <person name="Rajandream M.A."/>
            <person name="Sucgang R."/>
            <person name="Berriman M."/>
            <person name="Song J."/>
            <person name="Olsen R."/>
            <person name="Szafranski K."/>
            <person name="Xu Q."/>
            <person name="Tunggal B."/>
            <person name="Kummerfeld S."/>
            <person name="Madera M."/>
            <person name="Konfortov B.A."/>
            <person name="Rivero F."/>
            <person name="Bankier A.T."/>
            <person name="Lehmann R."/>
            <person name="Hamlin N."/>
            <person name="Davies R."/>
            <person name="Gaudet P."/>
            <person name="Fey P."/>
            <person name="Pilcher K."/>
            <person name="Chen G."/>
            <person name="Saunders D."/>
            <person name="Sodergren E.J."/>
            <person name="Davis P."/>
            <person name="Kerhornou A."/>
            <person name="Nie X."/>
            <person name="Hall N."/>
            <person name="Anjard C."/>
            <person name="Hemphill L."/>
            <person name="Bason N."/>
            <person name="Farbrother P."/>
            <person name="Desany B."/>
            <person name="Just E."/>
            <person name="Morio T."/>
            <person name="Rost R."/>
            <person name="Churcher C.M."/>
            <person name="Cooper J."/>
            <person name="Haydock S."/>
            <person name="van Driessche N."/>
            <person name="Cronin A."/>
            <person name="Goodhead I."/>
            <person name="Muzny D.M."/>
            <person name="Mourier T."/>
            <person name="Pain A."/>
            <person name="Lu M."/>
            <person name="Harper D."/>
            <person name="Lindsay R."/>
            <person name="Hauser H."/>
            <person name="James K.D."/>
            <person name="Quiles M."/>
            <person name="Madan Babu M."/>
            <person name="Saito T."/>
            <person name="Buchrieser C."/>
            <person name="Wardroper A."/>
            <person name="Felder M."/>
            <person name="Thangavelu M."/>
            <person name="Johnson D."/>
            <person name="Knights A."/>
            <person name="Loulseged H."/>
            <person name="Mungall K.L."/>
            <person name="Oliver K."/>
            <person name="Price C."/>
            <person name="Quail M.A."/>
            <person name="Urushihara H."/>
            <person name="Hernandez J."/>
            <person name="Rabbinowitsch E."/>
            <person name="Steffen D."/>
            <person name="Sanders M."/>
            <person name="Ma J."/>
            <person name="Kohara Y."/>
            <person name="Sharp S."/>
            <person name="Simmonds M.N."/>
            <person name="Spiegler S."/>
            <person name="Tivey A."/>
            <person name="Sugano S."/>
            <person name="White B."/>
            <person name="Walker D."/>
            <person name="Woodward J.R."/>
            <person name="Winckler T."/>
            <person name="Tanaka Y."/>
            <person name="Shaulsky G."/>
            <person name="Schleicher M."/>
            <person name="Weinstock G.M."/>
            <person name="Rosenthal A."/>
            <person name="Cox E.C."/>
            <person name="Chisholm R.L."/>
            <person name="Gibbs R.A."/>
            <person name="Loomis W.F."/>
            <person name="Platzer M."/>
            <person name="Kay R.R."/>
            <person name="Williams J.G."/>
            <person name="Dear P.H."/>
            <person name="Noegel A.A."/>
            <person name="Barrell B.G."/>
            <person name="Kuspa A."/>
        </authorList>
    </citation>
    <scope>NUCLEOTIDE SEQUENCE [LARGE SCALE GENOMIC DNA]</scope>
    <source>
        <strain>AX4</strain>
    </source>
</reference>
<reference key="4">
    <citation type="journal article" date="2006" name="Plasmid">
        <title>A series of Dictyostelium expression vectors for recombination cloning.</title>
        <authorList>
            <person name="Thomason P.A."/>
            <person name="Brazill D.T."/>
            <person name="Cox E.C."/>
        </authorList>
    </citation>
    <scope>DEVELOPMENTAL STAGE</scope>
</reference>
<name>DHKK_DICDI</name>
<keyword id="KW-0067">ATP-binding</keyword>
<keyword id="KW-0418">Kinase</keyword>
<keyword id="KW-0472">Membrane</keyword>
<keyword id="KW-0547">Nucleotide-binding</keyword>
<keyword id="KW-0539">Nucleus</keyword>
<keyword id="KW-0597">Phosphoprotein</keyword>
<keyword id="KW-0675">Receptor</keyword>
<keyword id="KW-1185">Reference proteome</keyword>
<keyword id="KW-0807">Transducer</keyword>
<keyword id="KW-0808">Transferase</keyword>
<keyword id="KW-0812">Transmembrane</keyword>
<keyword id="KW-1133">Transmembrane helix</keyword>
<keyword id="KW-0902">Two-component regulatory system</keyword>
<protein>
    <recommendedName>
        <fullName>Hybrid signal transduction histidine kinase K</fullName>
        <ecNumber>2.7.13.3</ecNumber>
    </recommendedName>
    <alternativeName>
        <fullName>Protein sombrero</fullName>
    </alternativeName>
</protein>
<comment type="function">
    <text>Involved in a signal transduction pathway that regulates morphogenesis and controls entry into the culmination stage. May act via the regA pathway, being activated by a morphogenesis-stimulated ligand, reducing phosphodiesterase regA levels and allowing cAMP level to rise to promote the culmination stage. This protein probably undergoes an ATP-dependent autophosphorylation at a conserved histidine residue in the kinase core, and a phosphoryl group is then transferred to a conserved aspartate residue in the receiver domain.</text>
</comment>
<comment type="catalytic activity">
    <reaction>
        <text>ATP + protein L-histidine = ADP + protein N-phospho-L-histidine.</text>
        <dbReference type="EC" id="2.7.13.3"/>
    </reaction>
</comment>
<comment type="subcellular location">
    <subcellularLocation>
        <location evidence="8">Nucleus membrane</location>
        <topology evidence="8">Multi-pass membrane protein</topology>
    </subcellularLocation>
</comment>
<comment type="developmental stage">
    <text evidence="6 7">First expressed prior to the start of aggregation, becoming concentrated in the slug anterior. Later is expressed in the maturing spore head of the fruiting body.</text>
</comment>
<comment type="PTM">
    <text evidence="1">Activation probably requires transfer of a phosphate group between a histidine in the kinase core (transmitter) domain and an aspartate of the receiver domain.</text>
</comment>
<sequence length="1213" mass="137716">MIELNNHSKINKNENNTNTRNNSSNNNNNNNNINKTNTNKYFEYNQNSIIYSSIPNSFLSHHPNSVGSQCLSLNSFLPPKPPILLSIFNSDTIGNNNNNNYSSSSSRNNSSGCSSSNNNNNNNNNNNNNNNNNNNNNNNNCNIEQYKNNQKQPKQQQQQKDQTIATQHRISLSSSSSSSSLSSSSSSSSVKQSFQIVKRLFGSLSEYMFPQKDEILYETDPYYLYQDDTQSNDSNEFYDDTDIGSDIDEANLNNTYNIQNCNKTLYNKQQQQAHFVNMNKNVNSNNGTGNSNQSNNVNKNQQNNNNNNNNNSHNNNNGNQNSSSSSSNSGASGSGGNGNNNNNNNNNNNNNNNNNNNSNSNSNNNSKSNNNNKKEGKDGATMNGSHPLIPFRKKPAQVPSPCFRMNSPNSDNDQYLDQLALENSSKKSLVVYNTDNLDQWKHSHLNENFDILQNDLIDIQQQQQQQQQQDNTLQYSSPINKRQEQEQQHIPFQFTTEQQQQLQQQQQQQQQNKTKQHPILLQRQQQQKQKQQQQQQIQQEQIGNNNSNNNNNINNNNNINNNYNNVNDLMNKFEIDQKQHDSQQNLVEEKRTPSFHEHNIIFNSFNFICSIVLDGSNIKSTEKYKAKLIIGFCFTILSFIPSWIIFFWLSGINKPAVMAIIAMPMSISSLVILKRTGSIHYPCHILCFTLCFALTINSYYTGGHQSTIRLLMSTVPIISALVLGRKASIQWSLMVLSIYLLFFVANLYGHEYVQGIPSIIIRSHMNFIIDVTIIIMTLIFTLCYQYFIDEAHRETKLKNAQLTIAKDAAIEAYQARQEFLATMSHEIRTPLNGLIGMATLLRDSHNLPPEEKTMAKAVKSCGDILLRLVNDILDLSKLEANQMGLEHIPFRMRELTQQICHVLSGQANEKNIHLSCEVSDKIPSILLGDSGRILQILMNLTGNALKFTQSGYVKIIIDLIEEESELVSLKKGEYNISFRVKDTGIGVPVESHQKIFEAFVQADPSDSRKYGGSGLGLYLCAKLVRLMKGEIGVYNNPDCDGSTFWFILPLEEGTDQSMQQMNNGARHKAFPQDCVKVLIAEDNIINQRVAVKFLEKIGIKAEVAGNGNEVLEILERQHYDLIFMDFQMPILDGLRCSKTIREFEQNHKWNRICPSIFICGLTANTMSTDKKRCFDHGMNHFISKPFQLEQLRSAIEMAIEHKQRNLMNLNIRN</sequence>
<dbReference type="EC" id="2.7.13.3"/>
<dbReference type="EMBL" id="AF362376">
    <property type="protein sequence ID" value="AAK54095.1"/>
    <property type="molecule type" value="Genomic_DNA"/>
</dbReference>
<dbReference type="EMBL" id="AY263399">
    <property type="protein sequence ID" value="AAP20874.1"/>
    <property type="molecule type" value="Genomic_DNA"/>
</dbReference>
<dbReference type="EMBL" id="AAFI02000023">
    <property type="protein sequence ID" value="EAL68116.1"/>
    <property type="molecule type" value="Genomic_DNA"/>
</dbReference>
<dbReference type="RefSeq" id="XP_642392.1">
    <property type="nucleotide sequence ID" value="XM_637300.1"/>
</dbReference>
<dbReference type="SMR" id="Q86CZ2"/>
<dbReference type="FunCoup" id="Q86CZ2">
    <property type="interactions" value="22"/>
</dbReference>
<dbReference type="STRING" id="44689.Q86CZ2"/>
<dbReference type="PaxDb" id="44689-DDB0214934"/>
<dbReference type="EnsemblProtists" id="EAL68116">
    <property type="protein sequence ID" value="EAL68116"/>
    <property type="gene ID" value="DDB_G0277887"/>
</dbReference>
<dbReference type="GeneID" id="8621597"/>
<dbReference type="KEGG" id="ddi:DDB_G0277887"/>
<dbReference type="dictyBase" id="DDB_G0277887">
    <property type="gene designation" value="dhkK"/>
</dbReference>
<dbReference type="VEuPathDB" id="AmoebaDB:DDB_G0277887"/>
<dbReference type="eggNOG" id="KOG0519">
    <property type="taxonomic scope" value="Eukaryota"/>
</dbReference>
<dbReference type="HOGENOM" id="CLU_269528_0_0_1"/>
<dbReference type="InParanoid" id="Q86CZ2"/>
<dbReference type="OMA" id="LEANQMG"/>
<dbReference type="PRO" id="PR:Q86CZ2"/>
<dbReference type="Proteomes" id="UP000002195">
    <property type="component" value="Chromosome 3"/>
</dbReference>
<dbReference type="GO" id="GO:0005635">
    <property type="term" value="C:nuclear envelope"/>
    <property type="evidence" value="ECO:0000314"/>
    <property type="project" value="dictyBase"/>
</dbReference>
<dbReference type="GO" id="GO:0031965">
    <property type="term" value="C:nuclear membrane"/>
    <property type="evidence" value="ECO:0007669"/>
    <property type="project" value="UniProtKB-SubCell"/>
</dbReference>
<dbReference type="GO" id="GO:0005524">
    <property type="term" value="F:ATP binding"/>
    <property type="evidence" value="ECO:0007669"/>
    <property type="project" value="UniProtKB-KW"/>
</dbReference>
<dbReference type="GO" id="GO:0000155">
    <property type="term" value="F:phosphorelay sensor kinase activity"/>
    <property type="evidence" value="ECO:0007669"/>
    <property type="project" value="InterPro"/>
</dbReference>
<dbReference type="GO" id="GO:0140582">
    <property type="term" value="P:adenylate cyclase-activating G protein-coupled cAMP receptor signaling pathway"/>
    <property type="evidence" value="ECO:0000315"/>
    <property type="project" value="dictyBase"/>
</dbReference>
<dbReference type="GO" id="GO:0031154">
    <property type="term" value="P:culmination involved in sorocarp development"/>
    <property type="evidence" value="ECO:0000315"/>
    <property type="project" value="dictyBase"/>
</dbReference>
<dbReference type="CDD" id="cd16922">
    <property type="entry name" value="HATPase_EvgS-ArcB-TorS-like"/>
    <property type="match status" value="1"/>
</dbReference>
<dbReference type="CDD" id="cd00082">
    <property type="entry name" value="HisKA"/>
    <property type="match status" value="1"/>
</dbReference>
<dbReference type="CDD" id="cd17546">
    <property type="entry name" value="REC_hyHK_CKI1_RcsC-like"/>
    <property type="match status" value="1"/>
</dbReference>
<dbReference type="FunFam" id="1.10.287.130:FF:000004">
    <property type="entry name" value="Ethylene receptor 1"/>
    <property type="match status" value="1"/>
</dbReference>
<dbReference type="FunFam" id="3.30.565.10:FF:000010">
    <property type="entry name" value="Sensor histidine kinase RcsC"/>
    <property type="match status" value="1"/>
</dbReference>
<dbReference type="Gene3D" id="1.10.287.130">
    <property type="match status" value="1"/>
</dbReference>
<dbReference type="Gene3D" id="3.40.50.2300">
    <property type="match status" value="1"/>
</dbReference>
<dbReference type="Gene3D" id="3.30.565.10">
    <property type="entry name" value="Histidine kinase-like ATPase, C-terminal domain"/>
    <property type="match status" value="1"/>
</dbReference>
<dbReference type="InterPro" id="IPR011006">
    <property type="entry name" value="CheY-like_superfamily"/>
</dbReference>
<dbReference type="InterPro" id="IPR036890">
    <property type="entry name" value="HATPase_C_sf"/>
</dbReference>
<dbReference type="InterPro" id="IPR005467">
    <property type="entry name" value="His_kinase_dom"/>
</dbReference>
<dbReference type="InterPro" id="IPR003661">
    <property type="entry name" value="HisK_dim/P_dom"/>
</dbReference>
<dbReference type="InterPro" id="IPR036097">
    <property type="entry name" value="HisK_dim/P_sf"/>
</dbReference>
<dbReference type="InterPro" id="IPR004358">
    <property type="entry name" value="Sig_transdc_His_kin-like_C"/>
</dbReference>
<dbReference type="InterPro" id="IPR001789">
    <property type="entry name" value="Sig_transdc_resp-reg_receiver"/>
</dbReference>
<dbReference type="PANTHER" id="PTHR45339:SF3">
    <property type="entry name" value="HISTIDINE KINASE"/>
    <property type="match status" value="1"/>
</dbReference>
<dbReference type="PANTHER" id="PTHR45339">
    <property type="entry name" value="HYBRID SIGNAL TRANSDUCTION HISTIDINE KINASE J"/>
    <property type="match status" value="1"/>
</dbReference>
<dbReference type="Pfam" id="PF02518">
    <property type="entry name" value="HATPase_c"/>
    <property type="match status" value="1"/>
</dbReference>
<dbReference type="Pfam" id="PF00512">
    <property type="entry name" value="HisKA"/>
    <property type="match status" value="1"/>
</dbReference>
<dbReference type="Pfam" id="PF00072">
    <property type="entry name" value="Response_reg"/>
    <property type="match status" value="1"/>
</dbReference>
<dbReference type="PRINTS" id="PR00344">
    <property type="entry name" value="BCTRLSENSOR"/>
</dbReference>
<dbReference type="SMART" id="SM00387">
    <property type="entry name" value="HATPase_c"/>
    <property type="match status" value="1"/>
</dbReference>
<dbReference type="SMART" id="SM00388">
    <property type="entry name" value="HisKA"/>
    <property type="match status" value="1"/>
</dbReference>
<dbReference type="SMART" id="SM00448">
    <property type="entry name" value="REC"/>
    <property type="match status" value="1"/>
</dbReference>
<dbReference type="SUPFAM" id="SSF55874">
    <property type="entry name" value="ATPase domain of HSP90 chaperone/DNA topoisomerase II/histidine kinase"/>
    <property type="match status" value="1"/>
</dbReference>
<dbReference type="SUPFAM" id="SSF52172">
    <property type="entry name" value="CheY-like"/>
    <property type="match status" value="1"/>
</dbReference>
<dbReference type="SUPFAM" id="SSF47384">
    <property type="entry name" value="Homodimeric domain of signal transducing histidine kinase"/>
    <property type="match status" value="1"/>
</dbReference>
<dbReference type="PROSITE" id="PS50109">
    <property type="entry name" value="HIS_KIN"/>
    <property type="match status" value="1"/>
</dbReference>
<dbReference type="PROSITE" id="PS50110">
    <property type="entry name" value="RESPONSE_REGULATORY"/>
    <property type="match status" value="1"/>
</dbReference>
<gene>
    <name type="primary">dhkK</name>
    <name type="synonym">smbA</name>
    <name type="ORF">DDB_G0277887</name>
</gene>
<organism>
    <name type="scientific">Dictyostelium discoideum</name>
    <name type="common">Social amoeba</name>
    <dbReference type="NCBI Taxonomy" id="44689"/>
    <lineage>
        <taxon>Eukaryota</taxon>
        <taxon>Amoebozoa</taxon>
        <taxon>Evosea</taxon>
        <taxon>Eumycetozoa</taxon>
        <taxon>Dictyostelia</taxon>
        <taxon>Dictyosteliales</taxon>
        <taxon>Dictyosteliaceae</taxon>
        <taxon>Dictyostelium</taxon>
    </lineage>
</organism>